<proteinExistence type="inferred from homology"/>
<accession>Q9YTR7</accession>
<comment type="function">
    <text evidence="1">Protein that inhibits host translation while promoting late viral translation by ribosome shunting. Blocks host cap-dependent translation by binding to eIF4G, displacing MKNK1 from cap initiation complexes and preventing EIF4E phosphorylation. Binds to the tripartite leader sequence of viral late mRNAs and recruits host eIF4G, PABPC1/poly-A binding protein and 40S ribosomes subunits on viral mRNAs, allowing ribosome shunting and efficient translation of late viral mRNAs even though conventional translation via ribosome scanning from the cap has been shut off in the host cell. During assembly, acts as a chaperone protein that helps hexon proteins assembly into trimers.</text>
</comment>
<comment type="subunit">
    <text evidence="1">Monomer. Interacts with hexon protein; this interaction allows chaperoning and trimerization of hexon proteins. Interacts (via N-terminus) with host initiation factor EIF4G (via C-terminus). Interacts (via RRM domain) with viral mRNAs that contain the tripartite leader; this interaction allows ribosome shunting and expression of viral late mRNAs.</text>
</comment>
<comment type="subcellular location">
    <subcellularLocation>
        <location evidence="1">Host cytoplasm</location>
    </subcellularLocation>
</comment>
<comment type="induction">
    <text evidence="1">Expressed in the late phase of the viral replicative cycle.</text>
</comment>
<comment type="PTM">
    <text evidence="1">Might be cleaved by the viral protease.</text>
</comment>
<comment type="PTM">
    <text evidence="1">Phosphorylated. Tyrosine phosphorylation enhances preferential binding to tripartite leader mRNAs and allows ribosome shunting.</text>
</comment>
<comment type="PTM">
    <text evidence="1">Methylated. Asymmetric dimethylation by host PRMT1 of the Arg/Gly-rich region may regulate shutoff protein binding to hexon and promote the capsid assembly in the nucleus.</text>
</comment>
<comment type="miscellaneous">
    <text evidence="1">All late proteins expressed from the major late promoter are produced by alternative splicing and alternative polyadenylation of the same gene giving rise to non-overlapping ORFs. A leader sequence is present in the N-terminus of all these mRNAs and is recognized by the viral shutoff protein to provide expression although conventional translation via ribosome scanning from the cap has been shut off in the host cell.</text>
</comment>
<comment type="similarity">
    <text evidence="1">Belongs to the adenoviridae shutoff protein family.</text>
</comment>
<dbReference type="EMBL" id="AF083132">
    <property type="protein sequence ID" value="AAC99445.1"/>
    <property type="molecule type" value="Genomic_DNA"/>
</dbReference>
<dbReference type="EMBL" id="AJ237815">
    <property type="protein sequence ID" value="CAB41033.1"/>
    <property type="molecule type" value="Genomic_DNA"/>
</dbReference>
<dbReference type="EMBL" id="AB026117">
    <property type="protein sequence ID" value="BAA76971.1"/>
    <property type="molecule type" value="Genomic_DNA"/>
</dbReference>
<dbReference type="RefSeq" id="YP_009213.1">
    <property type="nucleotide sequence ID" value="AC_000189.1"/>
</dbReference>
<dbReference type="OrthoDB" id="2556at10239"/>
<dbReference type="Proteomes" id="UP000101284">
    <property type="component" value="Genome"/>
</dbReference>
<dbReference type="Proteomes" id="UP000130591">
    <property type="component" value="Genome"/>
</dbReference>
<dbReference type="Proteomes" id="UP000148028">
    <property type="component" value="Genome"/>
</dbReference>
<dbReference type="GO" id="GO:0043657">
    <property type="term" value="C:host cell"/>
    <property type="evidence" value="ECO:0007669"/>
    <property type="project" value="GOC"/>
</dbReference>
<dbReference type="GO" id="GO:0030430">
    <property type="term" value="C:host cell cytoplasm"/>
    <property type="evidence" value="ECO:0007669"/>
    <property type="project" value="UniProtKB-SubCell"/>
</dbReference>
<dbReference type="GO" id="GO:0003723">
    <property type="term" value="F:RNA binding"/>
    <property type="evidence" value="ECO:0007669"/>
    <property type="project" value="UniProtKB-UniRule"/>
</dbReference>
<dbReference type="GO" id="GO:0019060">
    <property type="term" value="P:intracellular transport of viral protein in host cell"/>
    <property type="evidence" value="ECO:0007669"/>
    <property type="project" value="UniProtKB-UniRule"/>
</dbReference>
<dbReference type="GO" id="GO:0039657">
    <property type="term" value="P:symbiont-mediated suppression of host gene expression"/>
    <property type="evidence" value="ECO:0007669"/>
    <property type="project" value="UniProtKB-UniRule"/>
</dbReference>
<dbReference type="GO" id="GO:0039606">
    <property type="term" value="P:symbiont-mediated suppression of host translation initiation"/>
    <property type="evidence" value="ECO:0007669"/>
    <property type="project" value="UniProtKB-KW"/>
</dbReference>
<dbReference type="GO" id="GO:0039704">
    <property type="term" value="P:viral translational shunt"/>
    <property type="evidence" value="ECO:0000250"/>
    <property type="project" value="UniProtKB"/>
</dbReference>
<dbReference type="HAMAP" id="MF_04060">
    <property type="entry name" value="ADV_SHUT"/>
    <property type="match status" value="1"/>
</dbReference>
<dbReference type="InterPro" id="IPR003381">
    <property type="entry name" value="L4"/>
</dbReference>
<dbReference type="Pfam" id="PF02438">
    <property type="entry name" value="Adeno_100"/>
    <property type="match status" value="1"/>
</dbReference>
<organism>
    <name type="scientific">Porcine adenovirus A serotype 3</name>
    <name type="common">PAdV-3</name>
    <name type="synonym">Porcine adenovirus 3</name>
    <dbReference type="NCBI Taxonomy" id="35265"/>
    <lineage>
        <taxon>Viruses</taxon>
        <taxon>Varidnaviria</taxon>
        <taxon>Bamfordvirae</taxon>
        <taxon>Preplasmiviricota</taxon>
        <taxon>Tectiliviricetes</taxon>
        <taxon>Rowavirales</taxon>
        <taxon>Adenoviridae</taxon>
        <taxon>Mastadenovirus</taxon>
        <taxon>Mastadenovirus porcustertium</taxon>
    </lineage>
</organism>
<sequence length="838" mass="94103">MEDQHSAASELGSSAAPTLPPPPPPPPPPTSPPPSLQQRQQEPTETDDAEDTCSSSSSSSASSECFVSPLEDTSSEDSADTVLPSEPRRDEEEQEEDSPDRYMDADVLQRHLLRQSTILRQVLQEAAPGAAAEAAEAPSVAELSRRLEAALFSPATPPRRQENGTCAPDPRLNFYPVFMLPEALATYLLFFHNQKIPVSCRANRPRADAHWRLPSGTPLPDYPTTDEVYKIFEGLGDEEPACANQDLKERDSVLVELKLDNPRLAVVKQCIAVTHFAYPALALPPKVMSTLMQTLLVRRASPLPDEGETPLEDLLVVSDEQLARWMHTSDPKVLEERRKTVTAACMVTVQLHCMHTFLTSREMVRRLGECLHYMFRQGYVKLASKIANMELSNLVSYLGMLHENRLGQHVLHHTLKHEARRDYVRDTIYLYLVYTWQTAMGVWQQCLEDRNLRALETSLARARQSLWTGFDERTIAQDLAAFLFPTKLVETLQRSLPDFASQSMMHAFRSFVLERSGILPAVCNALPSDFVPTVYRECPPPLWAHCYLLRLANFLMYHCDLAEDTSGEGLFECYCRCNLCAPHRCLATNTALLNEVQAINTFELQRPPKPDGTLPPPFKLTPGLWTSAFLRHFVSEDYHSDRILFYEDVSRPPRVEPSACVITHSAILAQLHDIKKAREEFLLTKGHGVYLDPHTGEELNTAAPSTAHHAAPPEEAHPQQHQHQQQPSHRRRHHRSSYADRVRSELHAYGGATGSSRDPVSGGCSARGTHSRDAARRRGSQQRDQRQLRRQFAQYPRGTGGGGGTGHTDEAIQALLHQQQQQQEHQPAQELRRPQRGS</sequence>
<organismHost>
    <name type="scientific">Sus scrofa</name>
    <name type="common">Pig</name>
    <dbReference type="NCBI Taxonomy" id="9823"/>
</organismHost>
<protein>
    <recommendedName>
        <fullName evidence="1">Shutoff protein</fullName>
    </recommendedName>
    <alternativeName>
        <fullName evidence="1">100 kDa protein</fullName>
        <shortName evidence="1">p100K</shortName>
    </alternativeName>
    <alternativeName>
        <fullName evidence="1">100K-chaperone protein</fullName>
    </alternativeName>
    <alternativeName>
        <fullName evidence="1">L4-100K</fullName>
    </alternativeName>
    <alternativeName>
        <fullName evidence="1">Shutoff protein 100K</fullName>
    </alternativeName>
</protein>
<evidence type="ECO:0000255" key="1">
    <source>
        <dbReference type="HAMAP-Rule" id="MF_04060"/>
    </source>
</evidence>
<evidence type="ECO:0000256" key="2">
    <source>
        <dbReference type="SAM" id="MobiDB-lite"/>
    </source>
</evidence>
<gene>
    <name evidence="1" type="primary">L4</name>
</gene>
<reference key="1">
    <citation type="journal article" date="1998" name="Virology">
        <title>Nucleotide sequence and transcription map of porcine adenovirus type 3.</title>
        <authorList>
            <person name="Reddy P.S."/>
            <person name="Idamakanti N."/>
            <person name="Song J.Y."/>
            <person name="Lee J.B."/>
            <person name="Hyun B.H."/>
            <person name="Park J.H."/>
            <person name="Cha S.H."/>
            <person name="Bae Y.T."/>
            <person name="Tikoo S.K."/>
            <person name="Babiuk L.A."/>
        </authorList>
    </citation>
    <scope>NUCLEOTIDE SEQUENCE [GENOMIC DNA]</scope>
    <source>
        <strain>6618</strain>
    </source>
</reference>
<reference key="2">
    <citation type="submission" date="1999-02" db="EMBL/GenBank/DDBJ databases">
        <title>Porcine adenovirus serotype 3, complete genome.</title>
        <authorList>
            <person name="Larocque D."/>
            <person name="Malenfant F."/>
            <person name="Massie B."/>
            <person name="Dea S."/>
        </authorList>
    </citation>
    <scope>NUCLEOTIDE SEQUENCE [LARGE SCALE GENOMIC DNA]</scope>
    <source>
        <strain>6618 / IAF</strain>
    </source>
</reference>
<feature type="chain" id="PRO_0000221864" description="Shutoff protein">
    <location>
        <begin position="1"/>
        <end position="838"/>
    </location>
</feature>
<feature type="domain" description="RRM" evidence="1">
    <location>
        <begin position="356"/>
        <end position="474"/>
    </location>
</feature>
<feature type="region of interest" description="Disordered" evidence="2">
    <location>
        <begin position="1"/>
        <end position="102"/>
    </location>
</feature>
<feature type="region of interest" description="Binding to host EIF4G" evidence="1">
    <location>
        <begin position="291"/>
        <end position="353"/>
    </location>
</feature>
<feature type="region of interest" description="Disordered" evidence="2">
    <location>
        <begin position="693"/>
        <end position="838"/>
    </location>
</feature>
<feature type="compositionally biased region" description="Pro residues" evidence="2">
    <location>
        <begin position="18"/>
        <end position="35"/>
    </location>
</feature>
<feature type="compositionally biased region" description="Low complexity" evidence="2">
    <location>
        <begin position="52"/>
        <end position="65"/>
    </location>
</feature>
<feature type="compositionally biased region" description="Low complexity" evidence="2">
    <location>
        <begin position="701"/>
        <end position="710"/>
    </location>
</feature>
<feature type="compositionally biased region" description="Basic and acidic residues" evidence="2">
    <location>
        <begin position="737"/>
        <end position="746"/>
    </location>
</feature>
<feature type="compositionally biased region" description="Basic and acidic residues" evidence="2">
    <location>
        <begin position="770"/>
        <end position="787"/>
    </location>
</feature>
<feature type="compositionally biased region" description="Low complexity" evidence="2">
    <location>
        <begin position="813"/>
        <end position="829"/>
    </location>
</feature>
<feature type="modified residue" description="Phosphotyrosine; by host" evidence="1">
    <location>
        <position position="373"/>
    </location>
</feature>
<feature type="modified residue" description="Phosphotyrosine; by host" evidence="1">
    <location>
        <position position="690"/>
    </location>
</feature>
<keyword id="KW-0143">Chaperone</keyword>
<keyword id="KW-1262">Eukaryotic host gene expression shutoff by virus</keyword>
<keyword id="KW-1193">Eukaryotic host translation shutoff by virus</keyword>
<keyword id="KW-1035">Host cytoplasm</keyword>
<keyword id="KW-1190">Host gene expression shutoff by virus</keyword>
<keyword id="KW-0945">Host-virus interaction</keyword>
<keyword id="KW-1075">Inhibition of eukaryotic host translation factors by virus</keyword>
<keyword id="KW-0426">Late protein</keyword>
<keyword id="KW-0488">Methylation</keyword>
<keyword id="KW-0597">Phosphoprotein</keyword>
<keyword id="KW-1185">Reference proteome</keyword>
<keyword id="KW-0694">RNA-binding</keyword>
<keyword id="KW-1155">Translational shunt</keyword>
<keyword id="KW-0813">Transport</keyword>
<name>SHUT_ADEP3</name>